<sequence length="231" mass="26445">MSEIEKVTKTQFDNVYECIFNDGTTRLCTKNLSPGHNVYGERLIKYGGVEYREWNAFRSKLAGAIVKGLKYNPIVKGSKILYLGAASGTTPSHISDIVELQGKVYSVEFSPRVIRELLLVAQYRPNMFPILADARFPQYYKSLVENVDIVYVDIAQPNETEIAMYNARFFLKKNGYMMIAIKSRSIDVTKDPREIYNAEAKKLEDAGFDIREVLELDPYDKDHAMIVVKYK</sequence>
<reference key="1">
    <citation type="journal article" date="2000" name="Science">
        <title>Homologs of small nucleolar RNAs in Archaea.</title>
        <authorList>
            <person name="Omer A.D."/>
            <person name="Lowe T.M."/>
            <person name="Russell A.G."/>
            <person name="Ebhardt H."/>
            <person name="Eddy S.R."/>
            <person name="Dennis P.P."/>
        </authorList>
    </citation>
    <scope>NUCLEOTIDE SEQUENCE [GENOMIC DNA]</scope>
</reference>
<reference key="2">
    <citation type="journal article" date="2005" name="J. Bacteriol.">
        <title>The genome of Sulfolobus acidocaldarius, a model organism of the Crenarchaeota.</title>
        <authorList>
            <person name="Chen L."/>
            <person name="Bruegger K."/>
            <person name="Skovgaard M."/>
            <person name="Redder P."/>
            <person name="She Q."/>
            <person name="Torarinsson E."/>
            <person name="Greve B."/>
            <person name="Awayez M."/>
            <person name="Zibat A."/>
            <person name="Klenk H.-P."/>
            <person name="Garrett R.A."/>
        </authorList>
    </citation>
    <scope>NUCLEOTIDE SEQUENCE [LARGE SCALE GENOMIC DNA]</scope>
    <source>
        <strain>ATCC 33909 / DSM 639 / JCM 8929 / NBRC 15157 / NCIMB 11770</strain>
    </source>
</reference>
<feature type="chain" id="PRO_0000148548" description="Fibrillarin-like rRNA/tRNA 2'-O-methyltransferase">
    <location>
        <begin position="1"/>
        <end position="231"/>
    </location>
</feature>
<feature type="binding site" evidence="1">
    <location>
        <begin position="89"/>
        <end position="90"/>
    </location>
    <ligand>
        <name>S-adenosyl-L-methionine</name>
        <dbReference type="ChEBI" id="CHEBI:59789"/>
    </ligand>
</feature>
<feature type="binding site" evidence="1">
    <location>
        <begin position="108"/>
        <end position="109"/>
    </location>
    <ligand>
        <name>S-adenosyl-L-methionine</name>
        <dbReference type="ChEBI" id="CHEBI:59789"/>
    </ligand>
</feature>
<feature type="binding site" evidence="1">
    <location>
        <begin position="133"/>
        <end position="134"/>
    </location>
    <ligand>
        <name>S-adenosyl-L-methionine</name>
        <dbReference type="ChEBI" id="CHEBI:59789"/>
    </ligand>
</feature>
<feature type="binding site" evidence="1">
    <location>
        <begin position="153"/>
        <end position="156"/>
    </location>
    <ligand>
        <name>S-adenosyl-L-methionine</name>
        <dbReference type="ChEBI" id="CHEBI:59789"/>
    </ligand>
</feature>
<gene>
    <name evidence="1" type="primary">flpA</name>
    <name type="synonym">fib</name>
    <name type="ordered locus">Saci_1346</name>
</gene>
<comment type="function">
    <text evidence="1">Involved in pre-rRNA and tRNA processing. Utilizes the methyl donor S-adenosyl-L-methionine to catalyze the site-specific 2'-hydroxyl methylation of ribose moieties in rRNA and tRNA. Site specificity is provided by a guide RNA that base pairs with the substrate. Methylation occurs at a characteristic distance from the sequence involved in base pairing with the guide RNA.</text>
</comment>
<comment type="subunit">
    <text evidence="1">Interacts with nop5. Component of box C/D small ribonucleoprotein (sRNP) particles that contain rpl7ae, FlpA and nop5, plus a guide RNA.</text>
</comment>
<comment type="similarity">
    <text evidence="1">Belongs to the methyltransferase superfamily. Fibrillarin family.</text>
</comment>
<keyword id="KW-0489">Methyltransferase</keyword>
<keyword id="KW-1185">Reference proteome</keyword>
<keyword id="KW-0694">RNA-binding</keyword>
<keyword id="KW-0698">rRNA processing</keyword>
<keyword id="KW-0808">Transferase</keyword>
<keyword id="KW-0819">tRNA processing</keyword>
<evidence type="ECO:0000255" key="1">
    <source>
        <dbReference type="HAMAP-Rule" id="MF_00351"/>
    </source>
</evidence>
<name>FLPA_SULAC</name>
<protein>
    <recommendedName>
        <fullName evidence="1">Fibrillarin-like rRNA/tRNA 2'-O-methyltransferase</fullName>
        <ecNumber evidence="1">2.1.1.-</ecNumber>
    </recommendedName>
</protein>
<organism>
    <name type="scientific">Sulfolobus acidocaldarius (strain ATCC 33909 / DSM 639 / JCM 8929 / NBRC 15157 / NCIMB 11770)</name>
    <dbReference type="NCBI Taxonomy" id="330779"/>
    <lineage>
        <taxon>Archaea</taxon>
        <taxon>Thermoproteota</taxon>
        <taxon>Thermoprotei</taxon>
        <taxon>Sulfolobales</taxon>
        <taxon>Sulfolobaceae</taxon>
        <taxon>Sulfolobus</taxon>
    </lineage>
</organism>
<proteinExistence type="inferred from homology"/>
<accession>Q9P9M0</accession>
<accession>Q4J954</accession>
<dbReference type="EC" id="2.1.1.-" evidence="1"/>
<dbReference type="EMBL" id="AF201093">
    <property type="protein sequence ID" value="AAF69254.1"/>
    <property type="molecule type" value="Genomic_DNA"/>
</dbReference>
<dbReference type="EMBL" id="CP000077">
    <property type="protein sequence ID" value="AAY80681.1"/>
    <property type="molecule type" value="Genomic_DNA"/>
</dbReference>
<dbReference type="RefSeq" id="WP_011278183.1">
    <property type="nucleotide sequence ID" value="NC_007181.1"/>
</dbReference>
<dbReference type="SMR" id="Q9P9M0"/>
<dbReference type="STRING" id="330779.Saci_1346"/>
<dbReference type="GeneID" id="14551849"/>
<dbReference type="KEGG" id="sai:Saci_1346"/>
<dbReference type="PATRIC" id="fig|330779.12.peg.1299"/>
<dbReference type="eggNOG" id="arCOG00078">
    <property type="taxonomic scope" value="Archaea"/>
</dbReference>
<dbReference type="HOGENOM" id="CLU_059055_2_0_2"/>
<dbReference type="Proteomes" id="UP000001018">
    <property type="component" value="Chromosome"/>
</dbReference>
<dbReference type="GO" id="GO:1990259">
    <property type="term" value="F:histone H2AQ104 methyltransferase activity"/>
    <property type="evidence" value="ECO:0007669"/>
    <property type="project" value="TreeGrafter"/>
</dbReference>
<dbReference type="GO" id="GO:0003723">
    <property type="term" value="F:RNA binding"/>
    <property type="evidence" value="ECO:0007669"/>
    <property type="project" value="UniProtKB-UniRule"/>
</dbReference>
<dbReference type="GO" id="GO:0008649">
    <property type="term" value="F:rRNA methyltransferase activity"/>
    <property type="evidence" value="ECO:0007669"/>
    <property type="project" value="TreeGrafter"/>
</dbReference>
<dbReference type="GO" id="GO:0000494">
    <property type="term" value="P:box C/D sno(s)RNA 3'-end processing"/>
    <property type="evidence" value="ECO:0007669"/>
    <property type="project" value="TreeGrafter"/>
</dbReference>
<dbReference type="GO" id="GO:0008033">
    <property type="term" value="P:tRNA processing"/>
    <property type="evidence" value="ECO:0007669"/>
    <property type="project" value="UniProtKB-UniRule"/>
</dbReference>
<dbReference type="CDD" id="cd02440">
    <property type="entry name" value="AdoMet_MTases"/>
    <property type="match status" value="1"/>
</dbReference>
<dbReference type="FunFam" id="3.30.200.20:FF:000613">
    <property type="entry name" value="Fibrillarin-like rRNA/tRNA 2'-O-methyltransferase"/>
    <property type="match status" value="1"/>
</dbReference>
<dbReference type="Gene3D" id="3.30.200.20">
    <property type="entry name" value="Phosphorylase Kinase, domain 1"/>
    <property type="match status" value="1"/>
</dbReference>
<dbReference type="Gene3D" id="3.40.50.150">
    <property type="entry name" value="Vaccinia Virus protein VP39"/>
    <property type="match status" value="1"/>
</dbReference>
<dbReference type="HAMAP" id="MF_00351">
    <property type="entry name" value="RNA_methyltransf_FlpA"/>
    <property type="match status" value="1"/>
</dbReference>
<dbReference type="InterPro" id="IPR000692">
    <property type="entry name" value="Fibrillarin"/>
</dbReference>
<dbReference type="InterPro" id="IPR020813">
    <property type="entry name" value="Fibrillarin_CS"/>
</dbReference>
<dbReference type="InterPro" id="IPR029063">
    <property type="entry name" value="SAM-dependent_MTases_sf"/>
</dbReference>
<dbReference type="NCBIfam" id="NF003275">
    <property type="entry name" value="PRK04266.1-1"/>
    <property type="match status" value="1"/>
</dbReference>
<dbReference type="NCBIfam" id="NF003276">
    <property type="entry name" value="PRK04266.1-2"/>
    <property type="match status" value="1"/>
</dbReference>
<dbReference type="NCBIfam" id="NF003277">
    <property type="entry name" value="PRK04266.1-3"/>
    <property type="match status" value="1"/>
</dbReference>
<dbReference type="PANTHER" id="PTHR10335:SF17">
    <property type="entry name" value="FIBRILLARIN"/>
    <property type="match status" value="1"/>
</dbReference>
<dbReference type="PANTHER" id="PTHR10335">
    <property type="entry name" value="RRNA 2-O-METHYLTRANSFERASE FIBRILLARIN"/>
    <property type="match status" value="1"/>
</dbReference>
<dbReference type="Pfam" id="PF01269">
    <property type="entry name" value="Fibrillarin"/>
    <property type="match status" value="1"/>
</dbReference>
<dbReference type="PIRSF" id="PIRSF006540">
    <property type="entry name" value="Nop17p"/>
    <property type="match status" value="1"/>
</dbReference>
<dbReference type="PRINTS" id="PR00052">
    <property type="entry name" value="FIBRILLARIN"/>
</dbReference>
<dbReference type="SMART" id="SM01206">
    <property type="entry name" value="Fibrillarin"/>
    <property type="match status" value="1"/>
</dbReference>
<dbReference type="SUPFAM" id="SSF53335">
    <property type="entry name" value="S-adenosyl-L-methionine-dependent methyltransferases"/>
    <property type="match status" value="1"/>
</dbReference>
<dbReference type="PROSITE" id="PS00566">
    <property type="entry name" value="FIBRILLARIN"/>
    <property type="match status" value="1"/>
</dbReference>